<dbReference type="EMBL" id="AJ249239">
    <property type="protein sequence ID" value="CAB58991.1"/>
    <property type="status" value="ALT_INIT"/>
    <property type="molecule type" value="Genomic_RNA"/>
</dbReference>
<dbReference type="SMR" id="Q9QBY1"/>
<dbReference type="Proteomes" id="UP000101651">
    <property type="component" value="Segment"/>
</dbReference>
<dbReference type="GO" id="GO:0005576">
    <property type="term" value="C:extracellular region"/>
    <property type="evidence" value="ECO:0007669"/>
    <property type="project" value="UniProtKB-SubCell"/>
</dbReference>
<dbReference type="GO" id="GO:0044178">
    <property type="term" value="C:host cell Golgi membrane"/>
    <property type="evidence" value="ECO:0007669"/>
    <property type="project" value="UniProtKB-SubCell"/>
</dbReference>
<dbReference type="GO" id="GO:0020002">
    <property type="term" value="C:host cell plasma membrane"/>
    <property type="evidence" value="ECO:0007669"/>
    <property type="project" value="UniProtKB-SubCell"/>
</dbReference>
<dbReference type="GO" id="GO:0016020">
    <property type="term" value="C:membrane"/>
    <property type="evidence" value="ECO:0007669"/>
    <property type="project" value="UniProtKB-UniRule"/>
</dbReference>
<dbReference type="GO" id="GO:0044423">
    <property type="term" value="C:virion component"/>
    <property type="evidence" value="ECO:0007669"/>
    <property type="project" value="UniProtKB-UniRule"/>
</dbReference>
<dbReference type="GO" id="GO:0005525">
    <property type="term" value="F:GTP binding"/>
    <property type="evidence" value="ECO:0007669"/>
    <property type="project" value="UniProtKB-UniRule"/>
</dbReference>
<dbReference type="GO" id="GO:0017124">
    <property type="term" value="F:SH3 domain binding"/>
    <property type="evidence" value="ECO:0007669"/>
    <property type="project" value="UniProtKB-UniRule"/>
</dbReference>
<dbReference type="GO" id="GO:0046776">
    <property type="term" value="P:symbiont-mediated suppression of host antigen processing and presentation of peptide antigen via MHC class I"/>
    <property type="evidence" value="ECO:0007669"/>
    <property type="project" value="UniProtKB-UniRule"/>
</dbReference>
<dbReference type="GO" id="GO:0039505">
    <property type="term" value="P:symbiont-mediated suppression of host antigen processing and presentation of peptide antigen via MHC class II"/>
    <property type="evidence" value="ECO:0007669"/>
    <property type="project" value="UniProtKB-UniRule"/>
</dbReference>
<dbReference type="GO" id="GO:0140321">
    <property type="term" value="P:symbiont-mediated suppression of host autophagy"/>
    <property type="evidence" value="ECO:0007669"/>
    <property type="project" value="UniProtKB-KW"/>
</dbReference>
<dbReference type="Gene3D" id="4.10.890.10">
    <property type="entry name" value="HIV 1 nef anchor domain"/>
    <property type="match status" value="1"/>
</dbReference>
<dbReference type="Gene3D" id="3.30.62.10">
    <property type="entry name" value="Nef Regulatory Factor"/>
    <property type="match status" value="1"/>
</dbReference>
<dbReference type="HAMAP" id="MF_04078">
    <property type="entry name" value="NEF_HIV"/>
    <property type="match status" value="1"/>
</dbReference>
<dbReference type="InterPro" id="IPR027480">
    <property type="entry name" value="HIV-1_Nef_anchor_sf"/>
</dbReference>
<dbReference type="InterPro" id="IPR027481">
    <property type="entry name" value="HIV-1_Nef_core_sf"/>
</dbReference>
<dbReference type="InterPro" id="IPR001558">
    <property type="entry name" value="HIV_Nef"/>
</dbReference>
<dbReference type="Pfam" id="PF00469">
    <property type="entry name" value="F-protein"/>
    <property type="match status" value="1"/>
</dbReference>
<dbReference type="SUPFAM" id="SSF55671">
    <property type="entry name" value="Regulatory factor Nef"/>
    <property type="match status" value="1"/>
</dbReference>
<sequence>MGGKWSKSSIVGWPAIRERMRRARPAADRVGTQPAADGVGAVSQDLARHGAVTSSNTSHNNPDCAWLEAQEEEEVGFPVRPQVPLRPMTYKAAFDLGFFLKEKGGLDGLIYSKKRQEILDLWVYHTQGFFPDWQNYTPGPGIRYPLTFGWCYKLVPVDPAEVEETTEGEDNCLLHPINQHGMEDEHREILMWKFDSSLARRHVARELHPDYYKDC</sequence>
<evidence type="ECO:0000255" key="1">
    <source>
        <dbReference type="HAMAP-Rule" id="MF_04078"/>
    </source>
</evidence>
<organism>
    <name type="scientific">Human immunodeficiency virus type 1 group M subtype K (isolate 96CM-MP535)</name>
    <name type="common">HIV-1</name>
    <dbReference type="NCBI Taxonomy" id="388906"/>
    <lineage>
        <taxon>Viruses</taxon>
        <taxon>Riboviria</taxon>
        <taxon>Pararnavirae</taxon>
        <taxon>Artverviricota</taxon>
        <taxon>Revtraviricetes</taxon>
        <taxon>Ortervirales</taxon>
        <taxon>Retroviridae</taxon>
        <taxon>Orthoretrovirinae</taxon>
        <taxon>Lentivirus</taxon>
        <taxon>Human immunodeficiency virus type 1</taxon>
    </lineage>
</organism>
<keyword id="KW-0014">AIDS</keyword>
<keyword id="KW-0053">Apoptosis</keyword>
<keyword id="KW-0244">Early protein</keyword>
<keyword id="KW-1032">Host cell membrane</keyword>
<keyword id="KW-1040">Host Golgi apparatus</keyword>
<keyword id="KW-1043">Host membrane</keyword>
<keyword id="KW-0945">Host-virus interaction</keyword>
<keyword id="KW-1080">Inhibition of host adaptive immune response by virus</keyword>
<keyword id="KW-1083">Inhibition of host autophagy by virus</keyword>
<keyword id="KW-1115">Inhibition of host MHC class I molecule presentation by virus</keyword>
<keyword id="KW-1116">Inhibition of host MHC class II molecule presentation by virus</keyword>
<keyword id="KW-0449">Lipoprotein</keyword>
<keyword id="KW-0472">Membrane</keyword>
<keyword id="KW-0519">Myristate</keyword>
<keyword id="KW-0597">Phosphoprotein</keyword>
<keyword id="KW-0964">Secreted</keyword>
<keyword id="KW-0729">SH3-binding</keyword>
<keyword id="KW-0899">Viral immunoevasion</keyword>
<keyword id="KW-0946">Virion</keyword>
<keyword id="KW-0843">Virulence</keyword>
<gene>
    <name evidence="1" type="primary">nef</name>
</gene>
<comment type="function">
    <text evidence="1">Factor of infectivity and pathogenicity, required for optimal virus replication. Alters numerous pathways of T-lymphocyte function and down-regulates immunity surface molecules in order to evade host defense and increase viral infectivity. Alters the functionality of other immunity cells, like dendritic cells, monocytes/macrophages and NK cells.</text>
</comment>
<comment type="function">
    <text evidence="1">In infected CD4(+) T-lymphocytes, down-regulates the surface MHC-I, mature MHC-II, CD4, CD28, CCR5 and CXCR4 molecules. Mediates internalization and degradation of host CD4 through the interaction of with the cytoplasmic tail of CD4, the recruitment of AP-2 (clathrin adapter protein complex 2), internalization through clathrin coated pits, and subsequent transport to endosomes and lysosomes for degradation. Diverts host MHC-I molecules to the trans-Golgi network-associated endosomal compartments by an endocytic pathway to finally target them for degradation. MHC-I down-regulation may involve AP-1 (clathrin adapter protein complex 1) or possibly Src family kinase-ZAP70/Syk-PI3K cascade recruited by PACS2. In consequence infected cells are masked for immune recognition by cytotoxic T-lymphocytes. Decreasing the number of immune receptors also prevents reinfection by more HIV particles (superinfection). Down-regulates host SERINC3 and SERINC5 thereby excluding these proteins from the viral particles. Virion infectivity is drastically higher when SERINC3 or SERINC5 are excluded from the viral envelope, because these host antiviral proteins impair the membrane fusion event necessary for subsequent virion penetration.</text>
</comment>
<comment type="function">
    <text evidence="1">Bypasses host T-cell signaling by inducing a transcriptional program nearly identical to that of anti-CD3 cell activation. Interaction with TCR-zeta chain up-regulates the Fas ligand (FasL). Increasing surface FasL molecules and decreasing surface MHC-I molecules on infected CD4(+) cells send attacking cytotoxic CD8+ T-lymphocytes into apoptosis.</text>
</comment>
<comment type="function">
    <text evidence="1">Plays a role in optimizing the host cell environment for viral replication without causing cell death by apoptosis. Protects the infected cells from apoptosis in order to keep them alive until the next virus generation is ready to strike. Inhibits the Fas and TNFR-mediated death signals by blocking MAP3K5/ASK1. Decreases the half-life of TP53, protecting the infected cell against p53-mediated apoptosis. Inhibits the apoptotic signals regulated by the Bcl-2 family proteins through the formation of a Nef/PI3-kinase/PAK2 complex that leads to activation of PAK2 and induces phosphorylation of host BAD.</text>
</comment>
<comment type="function">
    <text evidence="1">Extracellular Nef protein targets CD4(+) T-lymphocytes for apoptosis by interacting with CXCR4 surface receptors.</text>
</comment>
<comment type="subunit">
    <text evidence="1">Monomer; cytosolic form. Homodimer; membrane bound form. Interacts with Nef associated p21-activated kinase (PAK2); this interaction activates PAK2. Associates with the Nef-MHC-I-AP1 complex; this complex is required for MHC-I internalization. Interacts (via C-terminus) with host PI3-kinase. Interacts with host PACS1; this interaction seems to be weak. Interacts with host PACS2. Interacts with host LCK and MAPK3; these interactions inhibit the kinase activity of the latter. Interacts with host ATP6V1H; this interaction may play a role in CD4 endocytosis. Associates with the CD4-Nef-AP2 complex; this complex is required for CD4 internalization. Interacts with host AP2 subunit alpha and AP2 subunit sigma2. Interacts with TCR-zeta chain; this interaction up-regulates the Fas ligand (FasL) surface expression. Interacts with host HCK, LYN, and SRC; these interactions activate the Src family kinases. Interacts with MAP3K5; this interaction inhibits the Fas and TNFR-mediated death signals. Interacts with beta-COP and PTE1. Interacts with human RACK1; this increases Nef phosphorylation by PKC. Interacts with TP53; this interaction decreases the half-life of TP53, protecting the infected cell against p53-mediated apoptosis.</text>
</comment>
<comment type="subcellular location">
    <subcellularLocation>
        <location evidence="1">Host cell membrane</location>
        <topology evidence="1">Lipid-anchor</topology>
        <orientation evidence="1">Cytoplasmic side</orientation>
    </subcellularLocation>
    <subcellularLocation>
        <location evidence="1">Virion</location>
    </subcellularLocation>
    <subcellularLocation>
        <location evidence="1">Secreted</location>
    </subcellularLocation>
    <subcellularLocation>
        <location evidence="1">Host Golgi apparatus membrane</location>
    </subcellularLocation>
    <text evidence="1">TGN localization requires PACS1. Associates with the inner plasma membrane through its N-terminal domain. Nef stimulates its own export via the release of exosomes. Incorporated in virions at a rate of about 10 molecules per virion, where it is cleaved.</text>
</comment>
<comment type="induction">
    <text evidence="1">Expressed early in the viral replication cycle.</text>
</comment>
<comment type="domain">
    <text evidence="1">The N-terminal domain is composed of the N-myristoyl glycine and of a cluster of positively charged amino acids. It is required for inner plasma membrane targeting of Nef and virion incorporation, and thereby for infectivity. This domain is also involved in binding to TP53.</text>
</comment>
<comment type="domain">
    <text evidence="1">The SH3-binding domain constituted of PxxP motifs mediates binding to several Src family proteins thereby regulating their tyrosine kinase activity. The same motifs also mediates the association with MAPK3, PI3-kinase and TCR-zeta.</text>
</comment>
<comment type="domain">
    <text evidence="1">The dileucine internalization motif and a diacidic motif seem to be required for binding to AP-2.</text>
</comment>
<comment type="domain">
    <text evidence="1">The acidic region binds to the sorting protein PACS-2, which targets Nef to the paranuclear region, enabling the PxxP motif to direct assembly of an SFK/ZAP-70/PI3K complex that accelerates endocytosis of cell-surface MHC-I.</text>
</comment>
<comment type="PTM">
    <text evidence="1">The virion-associated Nef proteins are cleaved by the viral protease to release the soluble C-terminal core protein. Nef is probably cleaved concomitantly with viral structural proteins on maturation of virus particles.</text>
</comment>
<comment type="PTM">
    <text evidence="1">Myristoylated.</text>
</comment>
<comment type="PTM">
    <text evidence="1">Phosphorylated on serine residues, probably by host PKCdelta and theta.</text>
</comment>
<comment type="miscellaneous">
    <text evidence="1">HIV-1 lineages are divided in three main groups, M (for Major), O (for Outlier), and N (for New, or Non-M, Non-O). The vast majority of strains found worldwide belong to the group M. Group O seems to be endemic to and largely confined to Cameroon and neighboring countries in West Central Africa, where these viruses represent a small minority of HIV-1 strains. The group N is represented by a limited number of isolates from Cameroonian persons. The group M is further subdivided in 9 clades or subtypes (A to D, F to H, J and K).</text>
</comment>
<comment type="similarity">
    <text evidence="1">Belongs to the lentivirus primate group Nef protein family.</text>
</comment>
<comment type="sequence caution">
    <conflict type="erroneous initiation">
        <sequence resource="EMBL-CDS" id="CAB58991"/>
    </conflict>
</comment>
<feature type="initiator methionine" description="Removed; by host" evidence="1">
    <location>
        <position position="1"/>
    </location>
</feature>
<feature type="chain" id="PRO_0000244791" description="Protein Nef" evidence="1">
    <location>
        <begin position="2"/>
        <end position="215"/>
    </location>
</feature>
<feature type="chain" id="PRO_0000244792" description="C-terminal core protein" evidence="1">
    <location>
        <begin position="67"/>
        <end position="215"/>
    </location>
</feature>
<feature type="region of interest" description="Acidic; interacts with host PACS1 and PACS2; stabilizes the interaction of NEF/MHC-I with host AP1M1; necessary for MHC-I internalization" evidence="1">
    <location>
        <begin position="71"/>
        <end position="74"/>
    </location>
</feature>
<feature type="region of interest" description="SH3-binding; interaction with Src family tyrosine kinases" evidence="1">
    <location>
        <begin position="78"/>
        <end position="87"/>
    </location>
</feature>
<feature type="region of interest" description="Mediates dimerization, Nef-PTE1 interaction" evidence="1">
    <location>
        <begin position="117"/>
        <end position="133"/>
    </location>
</feature>
<feature type="region of interest" description="Binding to ATP6V1H" evidence="1">
    <location>
        <begin position="157"/>
        <end position="189"/>
    </location>
</feature>
<feature type="short sequence motif" description="PxxP; stabilizes the interaction of NEF/MHC-I with host AP1M1; necessary for MHC-I internalization" evidence="1">
    <location>
        <begin position="81"/>
        <end position="84"/>
    </location>
</feature>
<feature type="short sequence motif" description="Dileucine internalization motif; necessary for CD4 internalization" evidence="1">
    <location>
        <begin position="173"/>
        <end position="174"/>
    </location>
</feature>
<feature type="short sequence motif" description="Diacidic; necessary for CD4 internalization" evidence="1">
    <location>
        <begin position="183"/>
        <end position="184"/>
    </location>
</feature>
<feature type="site" description="Might play a role in AP-1 recruitment to the Nef-MHC-I complex" evidence="1">
    <location>
        <position position="20"/>
    </location>
</feature>
<feature type="site" description="Cleavage; by viral protease" evidence="1">
    <location>
        <begin position="66"/>
        <end position="67"/>
    </location>
</feature>
<feature type="modified residue" description="Phosphoserine; by host" evidence="1">
    <location>
        <position position="6"/>
    </location>
</feature>
<feature type="lipid moiety-binding region" description="N-myristoyl glycine; by host" evidence="1">
    <location>
        <position position="2"/>
    </location>
</feature>
<proteinExistence type="inferred from homology"/>
<reference key="1">
    <citation type="journal article" date="2000" name="AIDS Res. Hum. Retroviruses">
        <title>Near-full-length genome sequencing of divergent African HIV type 1 subtype F viruses leads to the identification of a new HIV type 1 subtype designated K.</title>
        <authorList>
            <person name="Triques K."/>
            <person name="Bourgeois A."/>
            <person name="Vidale N."/>
            <person name="Mpoudi-Ngole E."/>
            <person name="Mulanga-Kabeya C."/>
            <person name="Nzilambi N."/>
            <person name="Torimiro N."/>
            <person name="Saman E."/>
            <person name="Delaporte E."/>
            <person name="Peeters M."/>
        </authorList>
    </citation>
    <scope>NUCLEOTIDE SEQUENCE [GENOMIC RNA]</scope>
</reference>
<name>NEF_HV196</name>
<organismHost>
    <name type="scientific">Homo sapiens</name>
    <name type="common">Human</name>
    <dbReference type="NCBI Taxonomy" id="9606"/>
</organismHost>
<protein>
    <recommendedName>
        <fullName evidence="1">Protein Nef</fullName>
    </recommendedName>
    <alternativeName>
        <fullName evidence="1">3'ORF</fullName>
    </alternativeName>
    <alternativeName>
        <fullName evidence="1">Negative factor</fullName>
        <shortName evidence="1">F-protein</shortName>
    </alternativeName>
    <component>
        <recommendedName>
            <fullName evidence="1">C-terminal core protein</fullName>
        </recommendedName>
    </component>
</protein>
<accession>Q9QBY1</accession>